<reference key="1">
    <citation type="journal article" date="2008" name="Mycol. Res.">
        <title>Characterization of Paracoccidioides brasiliensis COX9, COX12, and COX16 respiratory genes.</title>
        <authorList>
            <person name="Bandeira S.C.B."/>
            <person name="Nobrega M.P."/>
        </authorList>
    </citation>
    <scope>NUCLEOTIDE SEQUENCE [MRNA]</scope>
    <scope>INDUCTION</scope>
    <source>
        <strain>Pb18</strain>
    </source>
</reference>
<reference key="2">
    <citation type="journal article" date="2011" name="PLoS Genet.">
        <title>Comparative genomic analysis of human fungal pathogens causing paracoccidioidomycosis.</title>
        <authorList>
            <person name="Desjardins C.A."/>
            <person name="Champion M.D."/>
            <person name="Holder J.W."/>
            <person name="Muszewska A."/>
            <person name="Goldberg J."/>
            <person name="Bailao A.M."/>
            <person name="Brigido M.M."/>
            <person name="Ferreira M.E."/>
            <person name="Garcia A.M."/>
            <person name="Grynberg M."/>
            <person name="Gujja S."/>
            <person name="Heiman D.I."/>
            <person name="Henn M.R."/>
            <person name="Kodira C.D."/>
            <person name="Leon-Narvaez H."/>
            <person name="Longo L.V.G."/>
            <person name="Ma L.-J."/>
            <person name="Malavazi I."/>
            <person name="Matsuo A.L."/>
            <person name="Morais F.V."/>
            <person name="Pereira M."/>
            <person name="Rodriguez-Brito S."/>
            <person name="Sakthikumar S."/>
            <person name="Salem-Izacc S.M."/>
            <person name="Sykes S.M."/>
            <person name="Teixeira M.M."/>
            <person name="Vallejo M.C."/>
            <person name="Walter M.E."/>
            <person name="Yandava C."/>
            <person name="Young S."/>
            <person name="Zeng Q."/>
            <person name="Zucker J."/>
            <person name="Felipe M.S."/>
            <person name="Goldman G.H."/>
            <person name="Haas B.J."/>
            <person name="McEwen J.G."/>
            <person name="Nino-Vega G."/>
            <person name="Puccia R."/>
            <person name="San-Blas G."/>
            <person name="Soares C.M."/>
            <person name="Birren B.W."/>
            <person name="Cuomo C.A."/>
        </authorList>
    </citation>
    <scope>NUCLEOTIDE SEQUENCE [LARGE SCALE GENOMIC DNA]</scope>
    <source>
        <strain>Pb18</strain>
    </source>
</reference>
<comment type="function">
    <text evidence="1">Required for the assembly of the mitochondrial respiratory chain complex IV (CIV), also known as cytochrome c oxidase. May participate in merging the COX1 and COX2 assembly lines.</text>
</comment>
<comment type="subcellular location">
    <subcellularLocation>
        <location evidence="1">Mitochondrion inner membrane</location>
        <topology evidence="1">Single-pass membrane protein</topology>
    </subcellularLocation>
</comment>
<comment type="induction">
    <text evidence="3">Slightly induced during the mycelium to yeast transition.</text>
</comment>
<comment type="similarity">
    <text evidence="4">Belongs to the COX16 family.</text>
</comment>
<protein>
    <recommendedName>
        <fullName>Cytochrome c oxidase assembly protein COX16, mitochondrial</fullName>
    </recommendedName>
</protein>
<evidence type="ECO:0000250" key="1">
    <source>
        <dbReference type="UniProtKB" id="P47081"/>
    </source>
</evidence>
<evidence type="ECO:0000255" key="2"/>
<evidence type="ECO:0000269" key="3">
    <source>
    </source>
</evidence>
<evidence type="ECO:0000305" key="4"/>
<proteinExistence type="evidence at transcript level"/>
<accession>Q52ZA1</accession>
<accession>C1G0A4</accession>
<gene>
    <name type="primary">COX16</name>
    <name type="ORF">PADG_00294</name>
</gene>
<organism>
    <name type="scientific">Paracoccidioides brasiliensis (strain Pb18)</name>
    <dbReference type="NCBI Taxonomy" id="502780"/>
    <lineage>
        <taxon>Eukaryota</taxon>
        <taxon>Fungi</taxon>
        <taxon>Dikarya</taxon>
        <taxon>Ascomycota</taxon>
        <taxon>Pezizomycotina</taxon>
        <taxon>Eurotiomycetes</taxon>
        <taxon>Eurotiomycetidae</taxon>
        <taxon>Onygenales</taxon>
        <taxon>Ajellomycetaceae</taxon>
        <taxon>Paracoccidioides</taxon>
    </lineage>
</organism>
<sequence length="135" mass="15526">MVFQAKRFRPSNSFGSTLSERLGAKYRANLSKHPFLLFGLPFISVIIAGSFVLTPATAMRYERFDRKVQQVSQEEAMGLGLKGPEGDDGVQIKRNPRRRILGSEKEEYYKLMAKDLDNWEQKRVKRFKGEPDGRL</sequence>
<feature type="transit peptide" description="Mitochondrion" evidence="2">
    <location>
        <begin position="1"/>
        <end position="22"/>
    </location>
</feature>
<feature type="chain" id="PRO_0000280651" description="Cytochrome c oxidase assembly protein COX16, mitochondrial">
    <location>
        <begin position="23"/>
        <end position="135"/>
    </location>
</feature>
<feature type="transmembrane region" description="Helical" evidence="2">
    <location>
        <begin position="34"/>
        <end position="54"/>
    </location>
</feature>
<dbReference type="EMBL" id="AY842443">
    <property type="protein sequence ID" value="AAX40578.1"/>
    <property type="molecule type" value="mRNA"/>
</dbReference>
<dbReference type="EMBL" id="KN275957">
    <property type="protein sequence ID" value="EEH44005.1"/>
    <property type="molecule type" value="Genomic_DNA"/>
</dbReference>
<dbReference type="RefSeq" id="XP_010756289.1">
    <property type="nucleotide sequence ID" value="XM_010757987.1"/>
</dbReference>
<dbReference type="FunCoup" id="Q52ZA1">
    <property type="interactions" value="129"/>
</dbReference>
<dbReference type="STRING" id="502780.Q52ZA1"/>
<dbReference type="GeneID" id="22580153"/>
<dbReference type="KEGG" id="pbn:PADG_00294"/>
<dbReference type="VEuPathDB" id="FungiDB:PADG_00294"/>
<dbReference type="eggNOG" id="ENOG502S9GT">
    <property type="taxonomic scope" value="Eukaryota"/>
</dbReference>
<dbReference type="HOGENOM" id="CLU_131611_2_0_1"/>
<dbReference type="InParanoid" id="Q52ZA1"/>
<dbReference type="OMA" id="VNMKDEY"/>
<dbReference type="OrthoDB" id="34307at33183"/>
<dbReference type="Proteomes" id="UP000001628">
    <property type="component" value="Unassembled WGS sequence"/>
</dbReference>
<dbReference type="GO" id="GO:0005743">
    <property type="term" value="C:mitochondrial inner membrane"/>
    <property type="evidence" value="ECO:0007669"/>
    <property type="project" value="UniProtKB-SubCell"/>
</dbReference>
<dbReference type="GO" id="GO:0033617">
    <property type="term" value="P:mitochondrial cytochrome c oxidase assembly"/>
    <property type="evidence" value="ECO:0007669"/>
    <property type="project" value="TreeGrafter"/>
</dbReference>
<dbReference type="InterPro" id="IPR020164">
    <property type="entry name" value="Cyt_c_Oxase_assmbl_COX16"/>
</dbReference>
<dbReference type="PANTHER" id="PTHR17130:SF14">
    <property type="entry name" value="CYTOCHROME C OXIDASE ASSEMBLY PROTEIN COX16 HOMOLOG, MITOCHONDRIAL"/>
    <property type="match status" value="1"/>
</dbReference>
<dbReference type="PANTHER" id="PTHR17130">
    <property type="entry name" value="MITOCHONDRIAL OUTER MEMBRANE PROTEIN 25"/>
    <property type="match status" value="1"/>
</dbReference>
<dbReference type="Pfam" id="PF14138">
    <property type="entry name" value="COX16"/>
    <property type="match status" value="1"/>
</dbReference>
<keyword id="KW-0472">Membrane</keyword>
<keyword id="KW-0496">Mitochondrion</keyword>
<keyword id="KW-0999">Mitochondrion inner membrane</keyword>
<keyword id="KW-1185">Reference proteome</keyword>
<keyword id="KW-0809">Transit peptide</keyword>
<keyword id="KW-0812">Transmembrane</keyword>
<keyword id="KW-1133">Transmembrane helix</keyword>
<name>COX16_PARBD</name>